<proteinExistence type="inferred from homology"/>
<sequence>MSLEPFIDSKPFTFGVELEMQIVNTHDYDLTKAGSDLLRLIKDEKIPGNITPEITESMIELSTGICTTHEQAVTDLRKIRDTLVSAADHLNVGLCGGGTHAFQQWSERQIVDTPRFQYLSELYGYLAKQFTVFGQHVHIGCPDPNSALYLLHSMSRFIPHFIALSASSPFVQGVDTGFHSARLNSVFAFPLSGRAPFVLTWDSFEEYFSKMVHTGVVNSMKDFYWDIRPKPGFGTIEVRVMDTPLSVDRAAAIACYIQTLARHLLLDKPIAPQEDDYLVYTFNRFEACRFGLAGTCINPQTGERKTISEDILETLDLIAPHAEALGSGNALAEIGAIARGQVNDATWLRGVVEREKSLHEAVRQQCLQWRA</sequence>
<feature type="chain" id="PRO_1000148210" description="Putative glutamate--cysteine ligase 2">
    <location>
        <begin position="1"/>
        <end position="371"/>
    </location>
</feature>
<reference key="1">
    <citation type="journal article" date="2011" name="J. Bacteriol.">
        <title>Complete genome sequence of the plant growth-promoting endophyte Burkholderia phytofirmans strain PsJN.</title>
        <authorList>
            <person name="Weilharter A."/>
            <person name="Mitter B."/>
            <person name="Shin M.V."/>
            <person name="Chain P.S."/>
            <person name="Nowak J."/>
            <person name="Sessitsch A."/>
        </authorList>
    </citation>
    <scope>NUCLEOTIDE SEQUENCE [LARGE SCALE GENOMIC DNA]</scope>
    <source>
        <strain>DSM 17436 / LMG 22146 / PsJN</strain>
    </source>
</reference>
<name>GCS2_PARPJ</name>
<evidence type="ECO:0000255" key="1">
    <source>
        <dbReference type="HAMAP-Rule" id="MF_01609"/>
    </source>
</evidence>
<organism>
    <name type="scientific">Paraburkholderia phytofirmans (strain DSM 17436 / LMG 22146 / PsJN)</name>
    <name type="common">Burkholderia phytofirmans</name>
    <dbReference type="NCBI Taxonomy" id="398527"/>
    <lineage>
        <taxon>Bacteria</taxon>
        <taxon>Pseudomonadati</taxon>
        <taxon>Pseudomonadota</taxon>
        <taxon>Betaproteobacteria</taxon>
        <taxon>Burkholderiales</taxon>
        <taxon>Burkholderiaceae</taxon>
        <taxon>Paraburkholderia</taxon>
    </lineage>
</organism>
<accession>B2T7N6</accession>
<keyword id="KW-0067">ATP-binding</keyword>
<keyword id="KW-0436">Ligase</keyword>
<keyword id="KW-0547">Nucleotide-binding</keyword>
<comment type="function">
    <text evidence="1">ATP-dependent carboxylate-amine ligase which exhibits weak glutamate--cysteine ligase activity.</text>
</comment>
<comment type="catalytic activity">
    <reaction evidence="1">
        <text>L-cysteine + L-glutamate + ATP = gamma-L-glutamyl-L-cysteine + ADP + phosphate + H(+)</text>
        <dbReference type="Rhea" id="RHEA:13285"/>
        <dbReference type="ChEBI" id="CHEBI:15378"/>
        <dbReference type="ChEBI" id="CHEBI:29985"/>
        <dbReference type="ChEBI" id="CHEBI:30616"/>
        <dbReference type="ChEBI" id="CHEBI:35235"/>
        <dbReference type="ChEBI" id="CHEBI:43474"/>
        <dbReference type="ChEBI" id="CHEBI:58173"/>
        <dbReference type="ChEBI" id="CHEBI:456216"/>
        <dbReference type="EC" id="6.3.2.2"/>
    </reaction>
</comment>
<comment type="similarity">
    <text evidence="1">Belongs to the glutamate--cysteine ligase type 2 family. YbdK subfamily.</text>
</comment>
<dbReference type="EC" id="6.3.2.2" evidence="1"/>
<dbReference type="EMBL" id="CP001052">
    <property type="protein sequence ID" value="ACD18317.1"/>
    <property type="molecule type" value="Genomic_DNA"/>
</dbReference>
<dbReference type="RefSeq" id="WP_012434833.1">
    <property type="nucleotide sequence ID" value="NC_010681.1"/>
</dbReference>
<dbReference type="SMR" id="B2T7N6"/>
<dbReference type="STRING" id="398527.Bphyt_3930"/>
<dbReference type="KEGG" id="bpy:Bphyt_3930"/>
<dbReference type="eggNOG" id="COG2170">
    <property type="taxonomic scope" value="Bacteria"/>
</dbReference>
<dbReference type="HOGENOM" id="CLU_044848_1_1_4"/>
<dbReference type="OrthoDB" id="9769628at2"/>
<dbReference type="Proteomes" id="UP000001739">
    <property type="component" value="Chromosome 1"/>
</dbReference>
<dbReference type="GO" id="GO:0005524">
    <property type="term" value="F:ATP binding"/>
    <property type="evidence" value="ECO:0007669"/>
    <property type="project" value="UniProtKB-KW"/>
</dbReference>
<dbReference type="GO" id="GO:0004357">
    <property type="term" value="F:glutamate-cysteine ligase activity"/>
    <property type="evidence" value="ECO:0007669"/>
    <property type="project" value="UniProtKB-EC"/>
</dbReference>
<dbReference type="GO" id="GO:0042398">
    <property type="term" value="P:modified amino acid biosynthetic process"/>
    <property type="evidence" value="ECO:0007669"/>
    <property type="project" value="InterPro"/>
</dbReference>
<dbReference type="Gene3D" id="3.30.590.20">
    <property type="match status" value="1"/>
</dbReference>
<dbReference type="HAMAP" id="MF_01609">
    <property type="entry name" value="Glu_cys_ligase_2"/>
    <property type="match status" value="1"/>
</dbReference>
<dbReference type="InterPro" id="IPR050141">
    <property type="entry name" value="GCL_type2/YbdK_subfam"/>
</dbReference>
<dbReference type="InterPro" id="IPR006336">
    <property type="entry name" value="GCS2"/>
</dbReference>
<dbReference type="InterPro" id="IPR014746">
    <property type="entry name" value="Gln_synth/guanido_kin_cat_dom"/>
</dbReference>
<dbReference type="InterPro" id="IPR011793">
    <property type="entry name" value="YbdK"/>
</dbReference>
<dbReference type="NCBIfam" id="TIGR02050">
    <property type="entry name" value="gshA_cyan_rel"/>
    <property type="match status" value="1"/>
</dbReference>
<dbReference type="NCBIfam" id="NF010040">
    <property type="entry name" value="PRK13516.1"/>
    <property type="match status" value="1"/>
</dbReference>
<dbReference type="PANTHER" id="PTHR36510">
    <property type="entry name" value="GLUTAMATE--CYSTEINE LIGASE 2-RELATED"/>
    <property type="match status" value="1"/>
</dbReference>
<dbReference type="PANTHER" id="PTHR36510:SF1">
    <property type="entry name" value="GLUTAMATE--CYSTEINE LIGASE 2-RELATED"/>
    <property type="match status" value="1"/>
</dbReference>
<dbReference type="Pfam" id="PF04107">
    <property type="entry name" value="GCS2"/>
    <property type="match status" value="1"/>
</dbReference>
<dbReference type="SUPFAM" id="SSF55931">
    <property type="entry name" value="Glutamine synthetase/guanido kinase"/>
    <property type="match status" value="1"/>
</dbReference>
<gene>
    <name type="ordered locus">Bphyt_3930</name>
</gene>
<protein>
    <recommendedName>
        <fullName evidence="1">Putative glutamate--cysteine ligase 2</fullName>
        <ecNumber evidence="1">6.3.2.2</ecNumber>
    </recommendedName>
    <alternativeName>
        <fullName evidence="1">Gamma-glutamylcysteine synthetase 2</fullName>
        <shortName evidence="1">GCS 2</shortName>
        <shortName evidence="1">Gamma-GCS 2</shortName>
    </alternativeName>
</protein>